<evidence type="ECO:0000250" key="1">
    <source>
        <dbReference type="UniProtKB" id="Q6NXI8"/>
    </source>
</evidence>
<evidence type="ECO:0000250" key="2">
    <source>
        <dbReference type="UniProtKB" id="Q9EQC9"/>
    </source>
</evidence>
<evidence type="ECO:0000255" key="3">
    <source>
        <dbReference type="PROSITE-ProRule" id="PRU00509"/>
    </source>
</evidence>
<evidence type="ECO:0000256" key="4">
    <source>
        <dbReference type="SAM" id="MobiDB-lite"/>
    </source>
</evidence>
<evidence type="ECO:0000269" key="5">
    <source>
    </source>
</evidence>
<evidence type="ECO:0007744" key="6">
    <source>
        <dbReference type="PDB" id="5VC9"/>
    </source>
</evidence>
<evidence type="ECO:0007829" key="7">
    <source>
        <dbReference type="PDB" id="5VC9"/>
    </source>
</evidence>
<name>CXXC4_HUMAN</name>
<reference key="1">
    <citation type="journal article" date="2001" name="Mol. Cell. Biol.">
        <title>Inhibition of the Wnt signaling pathway by Idax, a novel Dvl-binding protein.</title>
        <authorList>
            <person name="Hino S."/>
            <person name="Kishida S."/>
            <person name="Michiue T."/>
            <person name="Fukui A."/>
            <person name="Sakamoto I."/>
            <person name="Takada S."/>
            <person name="Asashima M."/>
            <person name="Kikuchi A."/>
        </authorList>
    </citation>
    <scope>NUCLEOTIDE SEQUENCE [MRNA]</scope>
</reference>
<reference key="2">
    <citation type="journal article" date="2005" name="Nature">
        <title>Generation and annotation of the DNA sequences of human chromosomes 2 and 4.</title>
        <authorList>
            <person name="Hillier L.W."/>
            <person name="Graves T.A."/>
            <person name="Fulton R.S."/>
            <person name="Fulton L.A."/>
            <person name="Pepin K.H."/>
            <person name="Minx P."/>
            <person name="Wagner-McPherson C."/>
            <person name="Layman D."/>
            <person name="Wylie K."/>
            <person name="Sekhon M."/>
            <person name="Becker M.C."/>
            <person name="Fewell G.A."/>
            <person name="Delehaunty K.D."/>
            <person name="Miner T.L."/>
            <person name="Nash W.E."/>
            <person name="Kremitzki C."/>
            <person name="Oddy L."/>
            <person name="Du H."/>
            <person name="Sun H."/>
            <person name="Bradshaw-Cordum H."/>
            <person name="Ali J."/>
            <person name="Carter J."/>
            <person name="Cordes M."/>
            <person name="Harris A."/>
            <person name="Isak A."/>
            <person name="van Brunt A."/>
            <person name="Nguyen C."/>
            <person name="Du F."/>
            <person name="Courtney L."/>
            <person name="Kalicki J."/>
            <person name="Ozersky P."/>
            <person name="Abbott S."/>
            <person name="Armstrong J."/>
            <person name="Belter E.A."/>
            <person name="Caruso L."/>
            <person name="Cedroni M."/>
            <person name="Cotton M."/>
            <person name="Davidson T."/>
            <person name="Desai A."/>
            <person name="Elliott G."/>
            <person name="Erb T."/>
            <person name="Fronick C."/>
            <person name="Gaige T."/>
            <person name="Haakenson W."/>
            <person name="Haglund K."/>
            <person name="Holmes A."/>
            <person name="Harkins R."/>
            <person name="Kim K."/>
            <person name="Kruchowski S.S."/>
            <person name="Strong C.M."/>
            <person name="Grewal N."/>
            <person name="Goyea E."/>
            <person name="Hou S."/>
            <person name="Levy A."/>
            <person name="Martinka S."/>
            <person name="Mead K."/>
            <person name="McLellan M.D."/>
            <person name="Meyer R."/>
            <person name="Randall-Maher J."/>
            <person name="Tomlinson C."/>
            <person name="Dauphin-Kohlberg S."/>
            <person name="Kozlowicz-Reilly A."/>
            <person name="Shah N."/>
            <person name="Swearengen-Shahid S."/>
            <person name="Snider J."/>
            <person name="Strong J.T."/>
            <person name="Thompson J."/>
            <person name="Yoakum M."/>
            <person name="Leonard S."/>
            <person name="Pearman C."/>
            <person name="Trani L."/>
            <person name="Radionenko M."/>
            <person name="Waligorski J.E."/>
            <person name="Wang C."/>
            <person name="Rock S.M."/>
            <person name="Tin-Wollam A.-M."/>
            <person name="Maupin R."/>
            <person name="Latreille P."/>
            <person name="Wendl M.C."/>
            <person name="Yang S.-P."/>
            <person name="Pohl C."/>
            <person name="Wallis J.W."/>
            <person name="Spieth J."/>
            <person name="Bieri T.A."/>
            <person name="Berkowicz N."/>
            <person name="Nelson J.O."/>
            <person name="Osborne J."/>
            <person name="Ding L."/>
            <person name="Meyer R."/>
            <person name="Sabo A."/>
            <person name="Shotland Y."/>
            <person name="Sinha P."/>
            <person name="Wohldmann P.E."/>
            <person name="Cook L.L."/>
            <person name="Hickenbotham M.T."/>
            <person name="Eldred J."/>
            <person name="Williams D."/>
            <person name="Jones T.A."/>
            <person name="She X."/>
            <person name="Ciccarelli F.D."/>
            <person name="Izaurralde E."/>
            <person name="Taylor J."/>
            <person name="Schmutz J."/>
            <person name="Myers R.M."/>
            <person name="Cox D.R."/>
            <person name="Huang X."/>
            <person name="McPherson J.D."/>
            <person name="Mardis E.R."/>
            <person name="Clifton S.W."/>
            <person name="Warren W.C."/>
            <person name="Chinwalla A.T."/>
            <person name="Eddy S.R."/>
            <person name="Marra M.A."/>
            <person name="Ovcharenko I."/>
            <person name="Furey T.S."/>
            <person name="Miller W."/>
            <person name="Eichler E.E."/>
            <person name="Bork P."/>
            <person name="Suyama M."/>
            <person name="Torrents D."/>
            <person name="Waterston R.H."/>
            <person name="Wilson R.K."/>
        </authorList>
    </citation>
    <scope>NUCLEOTIDE SEQUENCE [LARGE SCALE GENOMIC DNA]</scope>
</reference>
<reference key="3">
    <citation type="submission" date="2005-07" db="EMBL/GenBank/DDBJ databases">
        <authorList>
            <person name="Mural R.J."/>
            <person name="Istrail S."/>
            <person name="Sutton G.G."/>
            <person name="Florea L."/>
            <person name="Halpern A.L."/>
            <person name="Mobarry C.M."/>
            <person name="Lippert R."/>
            <person name="Walenz B."/>
            <person name="Shatkay H."/>
            <person name="Dew I."/>
            <person name="Miller J.R."/>
            <person name="Flanigan M.J."/>
            <person name="Edwards N.J."/>
            <person name="Bolanos R."/>
            <person name="Fasulo D."/>
            <person name="Halldorsson B.V."/>
            <person name="Hannenhalli S."/>
            <person name="Turner R."/>
            <person name="Yooseph S."/>
            <person name="Lu F."/>
            <person name="Nusskern D.R."/>
            <person name="Shue B.C."/>
            <person name="Zheng X.H."/>
            <person name="Zhong F."/>
            <person name="Delcher A.L."/>
            <person name="Huson D.H."/>
            <person name="Kravitz S.A."/>
            <person name="Mouchard L."/>
            <person name="Reinert K."/>
            <person name="Remington K.A."/>
            <person name="Clark A.G."/>
            <person name="Waterman M.S."/>
            <person name="Eichler E.E."/>
            <person name="Adams M.D."/>
            <person name="Hunkapiller M.W."/>
            <person name="Myers E.W."/>
            <person name="Venter J.C."/>
        </authorList>
    </citation>
    <scope>NUCLEOTIDE SEQUENCE [LARGE SCALE GENOMIC DNA]</scope>
</reference>
<reference key="4">
    <citation type="journal article" date="2004" name="Genome Res.">
        <title>The status, quality, and expansion of the NIH full-length cDNA project: the Mammalian Gene Collection (MGC).</title>
        <authorList>
            <consortium name="The MGC Project Team"/>
        </authorList>
    </citation>
    <scope>NUCLEOTIDE SEQUENCE [LARGE SCALE MRNA]</scope>
</reference>
<reference evidence="6" key="5">
    <citation type="journal article" date="2018" name="Structure">
        <title>DNA Sequence Recognition of Human CXXC Domains and Their Structural Determinants.</title>
        <authorList>
            <person name="Xu C."/>
            <person name="Liu K."/>
            <person name="Lei M."/>
            <person name="Yang A."/>
            <person name="Li Y."/>
            <person name="Hughes T.R."/>
            <person name="Min J."/>
        </authorList>
    </citation>
    <scope>X-RAY CRYSTALLOGRAPHY (2.10 ANGSTROMS) OF 133-180 IN COMPLEX WITH CPG DNA</scope>
    <scope>FUNCTION</scope>
    <scope>DOMAIN CXXC-TYPE ZINC-FINGER</scope>
    <scope>ZINC-BINDING</scope>
</reference>
<sequence>MHHRNDSQRLGKAGCPPEPSLQMANTNFLSTLSPEHCRPLAGECMNKLKCGAAEAEIMNLPERVGTFSAIPALGGISLPPGVIVMTALHSPAAASAAVTDSAFQIANLADCPQNHSSSSSSSSGGAGGANPAKKKRKRCGVCVPCKRLINCGVCSSCRNRKTGHQICKFRKCEELKKKPGTSLERTPVPSAEAFRWFF</sequence>
<proteinExistence type="evidence at protein level"/>
<accession>Q9H2H0</accession>
<protein>
    <recommendedName>
        <fullName>CXXC-type zinc finger protein 4</fullName>
    </recommendedName>
    <alternativeName>
        <fullName>Inhibition of the Dvl and axin complex protein</fullName>
    </alternativeName>
</protein>
<keyword id="KW-0002">3D-structure</keyword>
<keyword id="KW-0963">Cytoplasm</keyword>
<keyword id="KW-0238">DNA-binding</keyword>
<keyword id="KW-0479">Metal-binding</keyword>
<keyword id="KW-1267">Proteomics identification</keyword>
<keyword id="KW-1185">Reference proteome</keyword>
<keyword id="KW-0879">Wnt signaling pathway</keyword>
<keyword id="KW-0862">Zinc</keyword>
<keyword id="KW-0863">Zinc-finger</keyword>
<organism>
    <name type="scientific">Homo sapiens</name>
    <name type="common">Human</name>
    <dbReference type="NCBI Taxonomy" id="9606"/>
    <lineage>
        <taxon>Eukaryota</taxon>
        <taxon>Metazoa</taxon>
        <taxon>Chordata</taxon>
        <taxon>Craniata</taxon>
        <taxon>Vertebrata</taxon>
        <taxon>Euteleostomi</taxon>
        <taxon>Mammalia</taxon>
        <taxon>Eutheria</taxon>
        <taxon>Euarchontoglires</taxon>
        <taxon>Primates</taxon>
        <taxon>Haplorrhini</taxon>
        <taxon>Catarrhini</taxon>
        <taxon>Hominidae</taxon>
        <taxon>Homo</taxon>
    </lineage>
</organism>
<feature type="chain" id="PRO_0000317542" description="CXXC-type zinc finger protein 4">
    <location>
        <begin position="1"/>
        <end position="198"/>
    </location>
</feature>
<feature type="zinc finger region" description="CXXC-type" evidence="3 5">
    <location>
        <begin position="132"/>
        <end position="173"/>
    </location>
</feature>
<feature type="region of interest" description="Disordered" evidence="4">
    <location>
        <begin position="114"/>
        <end position="134"/>
    </location>
</feature>
<feature type="region of interest" description="Interaction with DVL1" evidence="2">
    <location>
        <begin position="161"/>
        <end position="166"/>
    </location>
</feature>
<feature type="binding site" evidence="3 5 6">
    <location>
        <position position="139"/>
    </location>
    <ligand>
        <name>Zn(2+)</name>
        <dbReference type="ChEBI" id="CHEBI:29105"/>
        <label>1</label>
    </ligand>
</feature>
<feature type="binding site" evidence="3 5 6">
    <location>
        <position position="142"/>
    </location>
    <ligand>
        <name>Zn(2+)</name>
        <dbReference type="ChEBI" id="CHEBI:29105"/>
        <label>1</label>
    </ligand>
</feature>
<feature type="binding site" evidence="3 5 6">
    <location>
        <position position="145"/>
    </location>
    <ligand>
        <name>Zn(2+)</name>
        <dbReference type="ChEBI" id="CHEBI:29105"/>
        <label>1</label>
    </ligand>
</feature>
<feature type="binding site" evidence="3 5 6">
    <location>
        <position position="151"/>
    </location>
    <ligand>
        <name>Zn(2+)</name>
        <dbReference type="ChEBI" id="CHEBI:29105"/>
        <label>2</label>
    </ligand>
</feature>
<feature type="binding site" evidence="3 5 6">
    <location>
        <position position="154"/>
    </location>
    <ligand>
        <name>Zn(2+)</name>
        <dbReference type="ChEBI" id="CHEBI:29105"/>
        <label>2</label>
    </ligand>
</feature>
<feature type="binding site" evidence="3 5 6">
    <location>
        <position position="157"/>
    </location>
    <ligand>
        <name>Zn(2+)</name>
        <dbReference type="ChEBI" id="CHEBI:29105"/>
        <label>2</label>
    </ligand>
</feature>
<feature type="binding site" evidence="3 5 6">
    <location>
        <position position="167"/>
    </location>
    <ligand>
        <name>Zn(2+)</name>
        <dbReference type="ChEBI" id="CHEBI:29105"/>
        <label>2</label>
    </ligand>
</feature>
<feature type="binding site" evidence="3 5 6">
    <location>
        <position position="172"/>
    </location>
    <ligand>
        <name>Zn(2+)</name>
        <dbReference type="ChEBI" id="CHEBI:29105"/>
        <label>1</label>
    </ligand>
</feature>
<feature type="helix" evidence="7">
    <location>
        <begin position="143"/>
        <end position="146"/>
    </location>
</feature>
<feature type="helix" evidence="7">
    <location>
        <begin position="155"/>
        <end position="158"/>
    </location>
</feature>
<feature type="helix" evidence="7">
    <location>
        <begin position="160"/>
        <end position="163"/>
    </location>
</feature>
<feature type="turn" evidence="7">
    <location>
        <begin position="168"/>
        <end position="170"/>
    </location>
</feature>
<feature type="helix" evidence="7">
    <location>
        <begin position="173"/>
        <end position="175"/>
    </location>
</feature>
<dbReference type="EMBL" id="AF272159">
    <property type="protein sequence ID" value="AAG42072.1"/>
    <property type="molecule type" value="mRNA"/>
</dbReference>
<dbReference type="EMBL" id="AC093628">
    <property type="protein sequence ID" value="AAY40933.1"/>
    <property type="molecule type" value="Genomic_DNA"/>
</dbReference>
<dbReference type="EMBL" id="CH471057">
    <property type="protein sequence ID" value="EAX06175.1"/>
    <property type="molecule type" value="Genomic_DNA"/>
</dbReference>
<dbReference type="EMBL" id="BC119751">
    <property type="protein sequence ID" value="AAI19752.1"/>
    <property type="molecule type" value="mRNA"/>
</dbReference>
<dbReference type="EMBL" id="BC119752">
    <property type="protein sequence ID" value="AAI19753.1"/>
    <property type="molecule type" value="mRNA"/>
</dbReference>
<dbReference type="PDB" id="5VC9">
    <property type="method" value="X-ray"/>
    <property type="resolution" value="2.10 A"/>
    <property type="chains" value="C/F=133-180"/>
</dbReference>
<dbReference type="PDBsum" id="5VC9"/>
<dbReference type="SMR" id="Q9H2H0"/>
<dbReference type="FunCoup" id="Q9H2H0">
    <property type="interactions" value="368"/>
</dbReference>
<dbReference type="IntAct" id="Q9H2H0">
    <property type="interactions" value="7"/>
</dbReference>
<dbReference type="STRING" id="9606.ENSP00000378248"/>
<dbReference type="BindingDB" id="Q9H2H0"/>
<dbReference type="ChEMBL" id="CHEMBL5169197"/>
<dbReference type="iPTMnet" id="Q9H2H0"/>
<dbReference type="PhosphoSitePlus" id="Q9H2H0"/>
<dbReference type="BioMuta" id="CXXC4"/>
<dbReference type="DMDM" id="74752605"/>
<dbReference type="MassIVE" id="Q9H2H0"/>
<dbReference type="PaxDb" id="9606-ENSP00000378248"/>
<dbReference type="PeptideAtlas" id="Q9H2H0"/>
<dbReference type="ProteomicsDB" id="80549"/>
<dbReference type="AGR" id="HGNC:24593"/>
<dbReference type="GeneCards" id="CXXC4"/>
<dbReference type="HGNC" id="HGNC:24593">
    <property type="gene designation" value="CXXC4"/>
</dbReference>
<dbReference type="MIM" id="611645">
    <property type="type" value="gene"/>
</dbReference>
<dbReference type="neXtProt" id="NX_Q9H2H0"/>
<dbReference type="PharmGKB" id="PA134992016"/>
<dbReference type="eggNOG" id="ENOG502QQVJ">
    <property type="taxonomic scope" value="Eukaryota"/>
</dbReference>
<dbReference type="InParanoid" id="Q9H2H0"/>
<dbReference type="OrthoDB" id="8777148at2759"/>
<dbReference type="PAN-GO" id="Q9H2H0">
    <property type="GO annotations" value="2 GO annotations based on evolutionary models"/>
</dbReference>
<dbReference type="PhylomeDB" id="Q9H2H0"/>
<dbReference type="TreeFam" id="TF326617"/>
<dbReference type="PathwayCommons" id="Q9H2H0"/>
<dbReference type="Reactome" id="R-HSA-5368598">
    <property type="pathway name" value="Negative regulation of TCF-dependent signaling by DVL-interacting proteins"/>
</dbReference>
<dbReference type="SignaLink" id="Q9H2H0"/>
<dbReference type="ChiTaRS" id="CXXC4">
    <property type="organism name" value="human"/>
</dbReference>
<dbReference type="Pharos" id="Q9H2H0">
    <property type="development level" value="Tbio"/>
</dbReference>
<dbReference type="PRO" id="PR:Q9H2H0"/>
<dbReference type="Proteomes" id="UP000005640">
    <property type="component" value="Unplaced"/>
</dbReference>
<dbReference type="RNAct" id="Q9H2H0">
    <property type="molecule type" value="protein"/>
</dbReference>
<dbReference type="GO" id="GO:0005737">
    <property type="term" value="C:cytoplasm"/>
    <property type="evidence" value="ECO:0000314"/>
    <property type="project" value="BHF-UCL"/>
</dbReference>
<dbReference type="GO" id="GO:0031410">
    <property type="term" value="C:cytoplasmic vesicle"/>
    <property type="evidence" value="ECO:0000314"/>
    <property type="project" value="BHF-UCL"/>
</dbReference>
<dbReference type="GO" id="GO:0005634">
    <property type="term" value="C:nucleus"/>
    <property type="evidence" value="ECO:0000318"/>
    <property type="project" value="GO_Central"/>
</dbReference>
<dbReference type="GO" id="GO:0008327">
    <property type="term" value="F:methyl-CpG binding"/>
    <property type="evidence" value="ECO:0000314"/>
    <property type="project" value="UniProtKB"/>
</dbReference>
<dbReference type="GO" id="GO:0030165">
    <property type="term" value="F:PDZ domain binding"/>
    <property type="evidence" value="ECO:0000353"/>
    <property type="project" value="BHF-UCL"/>
</dbReference>
<dbReference type="GO" id="GO:0008270">
    <property type="term" value="F:zinc ion binding"/>
    <property type="evidence" value="ECO:0000314"/>
    <property type="project" value="UniProtKB"/>
</dbReference>
<dbReference type="GO" id="GO:0030178">
    <property type="term" value="P:negative regulation of Wnt signaling pathway"/>
    <property type="evidence" value="ECO:0000314"/>
    <property type="project" value="BHF-UCL"/>
</dbReference>
<dbReference type="GO" id="GO:0016055">
    <property type="term" value="P:Wnt signaling pathway"/>
    <property type="evidence" value="ECO:0007669"/>
    <property type="project" value="UniProtKB-KW"/>
</dbReference>
<dbReference type="GO" id="GO:0007352">
    <property type="term" value="P:zygotic specification of dorsal/ventral axis"/>
    <property type="evidence" value="ECO:0000250"/>
    <property type="project" value="BHF-UCL"/>
</dbReference>
<dbReference type="InterPro" id="IPR040388">
    <property type="entry name" value="CXXC4/CXXC5"/>
</dbReference>
<dbReference type="InterPro" id="IPR002857">
    <property type="entry name" value="Znf_CXXC"/>
</dbReference>
<dbReference type="PANTHER" id="PTHR13419:SF1">
    <property type="entry name" value="CXXC-TYPE ZINC FINGER PROTEIN 4"/>
    <property type="match status" value="1"/>
</dbReference>
<dbReference type="PANTHER" id="PTHR13419">
    <property type="entry name" value="ZINC FINGER-CONTAINING"/>
    <property type="match status" value="1"/>
</dbReference>
<dbReference type="Pfam" id="PF02008">
    <property type="entry name" value="zf-CXXC"/>
    <property type="match status" value="1"/>
</dbReference>
<dbReference type="PROSITE" id="PS51058">
    <property type="entry name" value="ZF_CXXC"/>
    <property type="match status" value="1"/>
</dbReference>
<comment type="function">
    <text evidence="1 5">Acts as a negative regulator of the Wnt signaling pathway via its interaction with DVL1 (By similarity). Binds preferentially to DNA containing cytidine-phosphate-guanosine (CpG) dinucleotides over CpH (H=A, T, and C), hemimethylated-CpG and hemimethylated-hydroxymethyl-CpG (PubMed:29276034).</text>
</comment>
<comment type="subunit">
    <text evidence="2">Interacts with the PDZ domain of DVL1.</text>
</comment>
<comment type="subcellular location">
    <subcellularLocation>
        <location evidence="2">Cytoplasm</location>
    </subcellularLocation>
</comment>
<comment type="domain">
    <text evidence="5">The CXXC zinc finger mediates binding to CpG-DNA.</text>
</comment>
<gene>
    <name type="primary">CXXC4</name>
    <name type="synonym">IDAX</name>
</gene>